<sequence>MTIFEGSFTNASTLKVGIVVARFNDLITNKILSGCLDCLKRHGLDTSETSKELDIVWVPGSFELPIAAKTLLKKTNYDVVIALGAVIRGETSHYDVVISEASKGISQVSYENNVPIIFGVLTTDSMQQALERAGIKNNLGWNYALQAIEMGSLIKNLN</sequence>
<feature type="chain" id="PRO_0000134786" description="6,7-dimethyl-8-ribityllumazine synthase">
    <location>
        <begin position="1"/>
        <end position="158"/>
    </location>
</feature>
<feature type="active site" description="Proton donor" evidence="1">
    <location>
        <position position="93"/>
    </location>
</feature>
<feature type="binding site" evidence="1">
    <location>
        <position position="23"/>
    </location>
    <ligand>
        <name>5-amino-6-(D-ribitylamino)uracil</name>
        <dbReference type="ChEBI" id="CHEBI:15934"/>
    </ligand>
</feature>
<feature type="binding site" evidence="1">
    <location>
        <begin position="61"/>
        <end position="63"/>
    </location>
    <ligand>
        <name>5-amino-6-(D-ribitylamino)uracil</name>
        <dbReference type="ChEBI" id="CHEBI:15934"/>
    </ligand>
</feature>
<feature type="binding site" evidence="1">
    <location>
        <begin position="85"/>
        <end position="87"/>
    </location>
    <ligand>
        <name>5-amino-6-(D-ribitylamino)uracil</name>
        <dbReference type="ChEBI" id="CHEBI:15934"/>
    </ligand>
</feature>
<feature type="binding site" evidence="1">
    <location>
        <begin position="90"/>
        <end position="91"/>
    </location>
    <ligand>
        <name>(2S)-2-hydroxy-3-oxobutyl phosphate</name>
        <dbReference type="ChEBI" id="CHEBI:58830"/>
    </ligand>
</feature>
<feature type="binding site" evidence="1">
    <location>
        <position position="118"/>
    </location>
    <ligand>
        <name>5-amino-6-(D-ribitylamino)uracil</name>
        <dbReference type="ChEBI" id="CHEBI:15934"/>
    </ligand>
</feature>
<feature type="binding site" evidence="1">
    <location>
        <position position="132"/>
    </location>
    <ligand>
        <name>(2S)-2-hydroxy-3-oxobutyl phosphate</name>
        <dbReference type="ChEBI" id="CHEBI:58830"/>
    </ligand>
</feature>
<keyword id="KW-0686">Riboflavin biosynthesis</keyword>
<keyword id="KW-0808">Transferase</keyword>
<organism>
    <name type="scientific">Prochlorococcus marinus subsp. pastoris (strain CCMP1986 / NIES-2087 / MED4)</name>
    <dbReference type="NCBI Taxonomy" id="59919"/>
    <lineage>
        <taxon>Bacteria</taxon>
        <taxon>Bacillati</taxon>
        <taxon>Cyanobacteriota</taxon>
        <taxon>Cyanophyceae</taxon>
        <taxon>Synechococcales</taxon>
        <taxon>Prochlorococcaceae</taxon>
        <taxon>Prochlorococcus</taxon>
    </lineage>
</organism>
<gene>
    <name evidence="1" type="primary">ribH</name>
    <name type="ordered locus">PMM1643</name>
</gene>
<name>RISB_PROMP</name>
<comment type="function">
    <text evidence="1">Catalyzes the formation of 6,7-dimethyl-8-ribityllumazine by condensation of 5-amino-6-(D-ribitylamino)uracil with 3,4-dihydroxy-2-butanone 4-phosphate. This is the penultimate step in the biosynthesis of riboflavin.</text>
</comment>
<comment type="catalytic activity">
    <reaction evidence="1">
        <text>(2S)-2-hydroxy-3-oxobutyl phosphate + 5-amino-6-(D-ribitylamino)uracil = 6,7-dimethyl-8-(1-D-ribityl)lumazine + phosphate + 2 H2O + H(+)</text>
        <dbReference type="Rhea" id="RHEA:26152"/>
        <dbReference type="ChEBI" id="CHEBI:15377"/>
        <dbReference type="ChEBI" id="CHEBI:15378"/>
        <dbReference type="ChEBI" id="CHEBI:15934"/>
        <dbReference type="ChEBI" id="CHEBI:43474"/>
        <dbReference type="ChEBI" id="CHEBI:58201"/>
        <dbReference type="ChEBI" id="CHEBI:58830"/>
        <dbReference type="EC" id="2.5.1.78"/>
    </reaction>
</comment>
<comment type="pathway">
    <text evidence="1">Cofactor biosynthesis; riboflavin biosynthesis; riboflavin from 2-hydroxy-3-oxobutyl phosphate and 5-amino-6-(D-ribitylamino)uracil: step 1/2.</text>
</comment>
<comment type="similarity">
    <text evidence="1">Belongs to the DMRL synthase family.</text>
</comment>
<accession>Q7UZL7</accession>
<dbReference type="EC" id="2.5.1.78" evidence="1"/>
<dbReference type="EMBL" id="BX548174">
    <property type="protein sequence ID" value="CAE20102.1"/>
    <property type="molecule type" value="Genomic_DNA"/>
</dbReference>
<dbReference type="RefSeq" id="WP_011133270.1">
    <property type="nucleotide sequence ID" value="NC_005072.1"/>
</dbReference>
<dbReference type="SMR" id="Q7UZL7"/>
<dbReference type="STRING" id="59919.PMM1643"/>
<dbReference type="KEGG" id="pmm:PMM1643"/>
<dbReference type="eggNOG" id="COG0054">
    <property type="taxonomic scope" value="Bacteria"/>
</dbReference>
<dbReference type="HOGENOM" id="CLU_089358_1_0_3"/>
<dbReference type="OrthoDB" id="9809709at2"/>
<dbReference type="UniPathway" id="UPA00275">
    <property type="reaction ID" value="UER00404"/>
</dbReference>
<dbReference type="Proteomes" id="UP000001026">
    <property type="component" value="Chromosome"/>
</dbReference>
<dbReference type="GO" id="GO:0005829">
    <property type="term" value="C:cytosol"/>
    <property type="evidence" value="ECO:0007669"/>
    <property type="project" value="TreeGrafter"/>
</dbReference>
<dbReference type="GO" id="GO:0009349">
    <property type="term" value="C:riboflavin synthase complex"/>
    <property type="evidence" value="ECO:0007669"/>
    <property type="project" value="InterPro"/>
</dbReference>
<dbReference type="GO" id="GO:0000906">
    <property type="term" value="F:6,7-dimethyl-8-ribityllumazine synthase activity"/>
    <property type="evidence" value="ECO:0007669"/>
    <property type="project" value="UniProtKB-UniRule"/>
</dbReference>
<dbReference type="GO" id="GO:0009231">
    <property type="term" value="P:riboflavin biosynthetic process"/>
    <property type="evidence" value="ECO:0007669"/>
    <property type="project" value="UniProtKB-UniRule"/>
</dbReference>
<dbReference type="CDD" id="cd09209">
    <property type="entry name" value="Lumazine_synthase-I"/>
    <property type="match status" value="1"/>
</dbReference>
<dbReference type="Gene3D" id="3.40.50.960">
    <property type="entry name" value="Lumazine/riboflavin synthase"/>
    <property type="match status" value="1"/>
</dbReference>
<dbReference type="HAMAP" id="MF_00178">
    <property type="entry name" value="Lumazine_synth"/>
    <property type="match status" value="1"/>
</dbReference>
<dbReference type="InterPro" id="IPR034964">
    <property type="entry name" value="LS"/>
</dbReference>
<dbReference type="InterPro" id="IPR002180">
    <property type="entry name" value="LS/RS"/>
</dbReference>
<dbReference type="InterPro" id="IPR036467">
    <property type="entry name" value="LS/RS_sf"/>
</dbReference>
<dbReference type="NCBIfam" id="TIGR00114">
    <property type="entry name" value="lumazine-synth"/>
    <property type="match status" value="1"/>
</dbReference>
<dbReference type="PANTHER" id="PTHR21058:SF0">
    <property type="entry name" value="6,7-DIMETHYL-8-RIBITYLLUMAZINE SYNTHASE"/>
    <property type="match status" value="1"/>
</dbReference>
<dbReference type="PANTHER" id="PTHR21058">
    <property type="entry name" value="6,7-DIMETHYL-8-RIBITYLLUMAZINE SYNTHASE DMRL SYNTHASE LUMAZINE SYNTHASE"/>
    <property type="match status" value="1"/>
</dbReference>
<dbReference type="Pfam" id="PF00885">
    <property type="entry name" value="DMRL_synthase"/>
    <property type="match status" value="1"/>
</dbReference>
<dbReference type="SUPFAM" id="SSF52121">
    <property type="entry name" value="Lumazine synthase"/>
    <property type="match status" value="1"/>
</dbReference>
<evidence type="ECO:0000255" key="1">
    <source>
        <dbReference type="HAMAP-Rule" id="MF_00178"/>
    </source>
</evidence>
<reference key="1">
    <citation type="journal article" date="2003" name="Nature">
        <title>Genome divergence in two Prochlorococcus ecotypes reflects oceanic niche differentiation.</title>
        <authorList>
            <person name="Rocap G."/>
            <person name="Larimer F.W."/>
            <person name="Lamerdin J.E."/>
            <person name="Malfatti S."/>
            <person name="Chain P."/>
            <person name="Ahlgren N.A."/>
            <person name="Arellano A."/>
            <person name="Coleman M."/>
            <person name="Hauser L."/>
            <person name="Hess W.R."/>
            <person name="Johnson Z.I."/>
            <person name="Land M.L."/>
            <person name="Lindell D."/>
            <person name="Post A.F."/>
            <person name="Regala W."/>
            <person name="Shah M."/>
            <person name="Shaw S.L."/>
            <person name="Steglich C."/>
            <person name="Sullivan M.B."/>
            <person name="Ting C.S."/>
            <person name="Tolonen A."/>
            <person name="Webb E.A."/>
            <person name="Zinser E.R."/>
            <person name="Chisholm S.W."/>
        </authorList>
    </citation>
    <scope>NUCLEOTIDE SEQUENCE [LARGE SCALE GENOMIC DNA]</scope>
    <source>
        <strain>CCMP1986 / NIES-2087 / MED4</strain>
    </source>
</reference>
<protein>
    <recommendedName>
        <fullName evidence="1">6,7-dimethyl-8-ribityllumazine synthase</fullName>
        <shortName evidence="1">DMRL synthase</shortName>
        <shortName evidence="1">LS</shortName>
        <shortName evidence="1">Lumazine synthase</shortName>
        <ecNumber evidence="1">2.5.1.78</ecNumber>
    </recommendedName>
</protein>
<proteinExistence type="inferred from homology"/>